<feature type="chain" id="PRO_0000063211" description="Caffeic acid 3-O-methyltransferase">
    <location>
        <begin position="1"/>
        <end position="365"/>
    </location>
</feature>
<feature type="region of interest" description="Substrate binding" evidence="1">
    <location>
        <begin position="162"/>
        <end position="180"/>
    </location>
</feature>
<feature type="active site" description="Proton acceptor" evidence="2">
    <location>
        <position position="269"/>
    </location>
</feature>
<feature type="binding site" evidence="1">
    <location>
        <begin position="130"/>
        <end position="136"/>
    </location>
    <ligand>
        <name>substrate</name>
    </ligand>
</feature>
<feature type="binding site" evidence="2">
    <location>
        <position position="208"/>
    </location>
    <ligand>
        <name>S-adenosyl-L-methionine</name>
        <dbReference type="ChEBI" id="CHEBI:59789"/>
    </ligand>
</feature>
<feature type="binding site" evidence="2">
    <location>
        <position position="231"/>
    </location>
    <ligand>
        <name>S-adenosyl-L-methionine</name>
        <dbReference type="ChEBI" id="CHEBI:59789"/>
    </ligand>
</feature>
<feature type="binding site" evidence="2">
    <location>
        <position position="251"/>
    </location>
    <ligand>
        <name>S-adenosyl-L-methionine</name>
        <dbReference type="ChEBI" id="CHEBI:59789"/>
    </ligand>
</feature>
<feature type="binding site" evidence="2">
    <location>
        <position position="252"/>
    </location>
    <ligand>
        <name>S-adenosyl-L-methionine</name>
        <dbReference type="ChEBI" id="CHEBI:59789"/>
    </ligand>
</feature>
<feature type="binding site" evidence="2">
    <location>
        <position position="265"/>
    </location>
    <ligand>
        <name>S-adenosyl-L-methionine</name>
        <dbReference type="ChEBI" id="CHEBI:59789"/>
    </ligand>
</feature>
<gene>
    <name type="primary">COMT1</name>
</gene>
<comment type="function">
    <text>Catalyzes the conversion of caffeic acid to ferulic acid and of 5-hydroxyferulic acid to sinapic acid. The resulting products may subsequently be converted to the corresponding alcohols that are incorporated into lignins.</text>
</comment>
<comment type="catalytic activity">
    <reaction>
        <text>(E)-caffeate + S-adenosyl-L-methionine = (E)-ferulate + S-adenosyl-L-homocysteine + H(+)</text>
        <dbReference type="Rhea" id="RHEA:20225"/>
        <dbReference type="ChEBI" id="CHEBI:15378"/>
        <dbReference type="ChEBI" id="CHEBI:29749"/>
        <dbReference type="ChEBI" id="CHEBI:57770"/>
        <dbReference type="ChEBI" id="CHEBI:57856"/>
        <dbReference type="ChEBI" id="CHEBI:59789"/>
        <dbReference type="EC" id="2.1.1.68"/>
    </reaction>
</comment>
<comment type="pathway">
    <text>Aromatic compound metabolism; phenylpropanoid biosynthesis.</text>
</comment>
<comment type="subunit">
    <text evidence="1">Homodimer.</text>
</comment>
<comment type="similarity">
    <text evidence="2">Belongs to the class I-like SAM-binding methyltransferase superfamily. Cation-independent O-methyltransferase family. COMT subfamily.</text>
</comment>
<accession>Q43609</accession>
<organism>
    <name type="scientific">Prunus dulcis</name>
    <name type="common">Almond</name>
    <name type="synonym">Amygdalus dulcis</name>
    <dbReference type="NCBI Taxonomy" id="3755"/>
    <lineage>
        <taxon>Eukaryota</taxon>
        <taxon>Viridiplantae</taxon>
        <taxon>Streptophyta</taxon>
        <taxon>Embryophyta</taxon>
        <taxon>Tracheophyta</taxon>
        <taxon>Spermatophyta</taxon>
        <taxon>Magnoliopsida</taxon>
        <taxon>eudicotyledons</taxon>
        <taxon>Gunneridae</taxon>
        <taxon>Pentapetalae</taxon>
        <taxon>rosids</taxon>
        <taxon>fabids</taxon>
        <taxon>Rosales</taxon>
        <taxon>Rosaceae</taxon>
        <taxon>Amygdaloideae</taxon>
        <taxon>Amygdaleae</taxon>
        <taxon>Prunus</taxon>
    </lineage>
</organism>
<dbReference type="EC" id="2.1.1.68"/>
<dbReference type="EMBL" id="X83217">
    <property type="protein sequence ID" value="CAA58218.1"/>
    <property type="molecule type" value="mRNA"/>
</dbReference>
<dbReference type="SMR" id="Q43609"/>
<dbReference type="UniPathway" id="UPA00711"/>
<dbReference type="GO" id="GO:0047763">
    <property type="term" value="F:caffeate O-methyltransferase activity"/>
    <property type="evidence" value="ECO:0007669"/>
    <property type="project" value="UniProtKB-EC"/>
</dbReference>
<dbReference type="GO" id="GO:0046983">
    <property type="term" value="F:protein dimerization activity"/>
    <property type="evidence" value="ECO:0007669"/>
    <property type="project" value="InterPro"/>
</dbReference>
<dbReference type="GO" id="GO:0009809">
    <property type="term" value="P:lignin biosynthetic process"/>
    <property type="evidence" value="ECO:0007669"/>
    <property type="project" value="UniProtKB-KW"/>
</dbReference>
<dbReference type="GO" id="GO:0032259">
    <property type="term" value="P:methylation"/>
    <property type="evidence" value="ECO:0007669"/>
    <property type="project" value="UniProtKB-KW"/>
</dbReference>
<dbReference type="CDD" id="cd02440">
    <property type="entry name" value="AdoMet_MTases"/>
    <property type="match status" value="1"/>
</dbReference>
<dbReference type="FunFam" id="1.10.10.10:FF:000357">
    <property type="entry name" value="Caffeic acid 3-O-methyltransferase"/>
    <property type="match status" value="1"/>
</dbReference>
<dbReference type="FunFam" id="3.40.50.150:FF:000061">
    <property type="entry name" value="Caffeic acid O-methyltransferase"/>
    <property type="match status" value="1"/>
</dbReference>
<dbReference type="Gene3D" id="3.40.50.150">
    <property type="entry name" value="Vaccinia Virus protein VP39"/>
    <property type="match status" value="1"/>
</dbReference>
<dbReference type="Gene3D" id="1.10.10.10">
    <property type="entry name" value="Winged helix-like DNA-binding domain superfamily/Winged helix DNA-binding domain"/>
    <property type="match status" value="1"/>
</dbReference>
<dbReference type="InterPro" id="IPR016461">
    <property type="entry name" value="COMT-like"/>
</dbReference>
<dbReference type="InterPro" id="IPR001077">
    <property type="entry name" value="O_MeTrfase_dom"/>
</dbReference>
<dbReference type="InterPro" id="IPR012967">
    <property type="entry name" value="Plant_O-MeTrfase_dimerisation"/>
</dbReference>
<dbReference type="InterPro" id="IPR029063">
    <property type="entry name" value="SAM-dependent_MTases_sf"/>
</dbReference>
<dbReference type="InterPro" id="IPR036388">
    <property type="entry name" value="WH-like_DNA-bd_sf"/>
</dbReference>
<dbReference type="InterPro" id="IPR036390">
    <property type="entry name" value="WH_DNA-bd_sf"/>
</dbReference>
<dbReference type="PANTHER" id="PTHR11746">
    <property type="entry name" value="O-METHYLTRANSFERASE"/>
    <property type="match status" value="1"/>
</dbReference>
<dbReference type="Pfam" id="PF08100">
    <property type="entry name" value="Dimerisation"/>
    <property type="match status" value="1"/>
</dbReference>
<dbReference type="Pfam" id="PF00891">
    <property type="entry name" value="Methyltransf_2"/>
    <property type="match status" value="1"/>
</dbReference>
<dbReference type="PIRSF" id="PIRSF005739">
    <property type="entry name" value="O-mtase"/>
    <property type="match status" value="1"/>
</dbReference>
<dbReference type="SUPFAM" id="SSF53335">
    <property type="entry name" value="S-adenosyl-L-methionine-dependent methyltransferases"/>
    <property type="match status" value="1"/>
</dbReference>
<dbReference type="SUPFAM" id="SSF46785">
    <property type="entry name" value="Winged helix' DNA-binding domain"/>
    <property type="match status" value="1"/>
</dbReference>
<dbReference type="PROSITE" id="PS51683">
    <property type="entry name" value="SAM_OMT_II"/>
    <property type="match status" value="1"/>
</dbReference>
<name>COMT1_PRUDU</name>
<keyword id="KW-0438">Lignin biosynthesis</keyword>
<keyword id="KW-0489">Methyltransferase</keyword>
<keyword id="KW-0949">S-adenosyl-L-methionine</keyword>
<keyword id="KW-0808">Transferase</keyword>
<proteinExistence type="evidence at transcript level"/>
<evidence type="ECO:0000250" key="1"/>
<evidence type="ECO:0000255" key="2">
    <source>
        <dbReference type="PROSITE-ProRule" id="PRU01020"/>
    </source>
</evidence>
<protein>
    <recommendedName>
        <fullName>Caffeic acid 3-O-methyltransferase</fullName>
        <shortName>CAOMT</shortName>
        <shortName>COMT</shortName>
        <ecNumber>2.1.1.68</ecNumber>
    </recommendedName>
    <alternativeName>
        <fullName>S-adenosysl-L-methionine:caffeic acid 3-O-methyltransferase</fullName>
    </alternativeName>
</protein>
<reference key="1">
    <citation type="online journal article" date="1995" name="Plant Gene Register">
        <title>The caffeic acid O-methyltransferase from Prunus amygdalus.</title>
        <authorList>
            <person name="Garcia-Mas J."/>
            <person name="Messeguer R."/>
            <person name="Arus P."/>
            <person name="Puigdomenech P."/>
        </authorList>
        <locator>PGR95-006</locator>
    </citation>
    <scope>NUCLEOTIDE SEQUENCE [MRNA]</scope>
    <source>
        <strain>cv. Texas</strain>
        <tissue>Root</tissue>
    </source>
</reference>
<sequence>MGSTGETQMTPTQVSDEEANLFAMQLASASVLPMVLKAAIELDLLEIMAKAGPGVFLSPTDIASQLPTKNPDAPVMLDRMLRLLASYSILTYSLRTLADGKVERLYGLGPVCKFLTKNEEGVSIAPLCLMNQDKVLLESWYHLKDAVLEGGIPFNKAYGMTAFEYHGTDPRFNKVFNRGMADHSTITMKKILETYKGFEGLTSVVDVGGGTGAVLNMIVSKYPSIKGINFDLPHVIEDAPQYPGVEHVGGDMFVSVPKGDAIFMKWICHDWSDEHCLKFLKNCYAALPDNGKVILGECILPVAPDSSLATKGVVHIDVIMLAHNPGGKERTEQEFQALAKGAGFQGFNVACSAFNTYVIEFLKKN</sequence>